<accession>Q54XX9</accession>
<name>PX24B_DICDI</name>
<organism>
    <name type="scientific">Dictyostelium discoideum</name>
    <name type="common">Social amoeba</name>
    <dbReference type="NCBI Taxonomy" id="44689"/>
    <lineage>
        <taxon>Eukaryota</taxon>
        <taxon>Amoebozoa</taxon>
        <taxon>Evosea</taxon>
        <taxon>Eumycetozoa</taxon>
        <taxon>Dictyostelia</taxon>
        <taxon>Dictyosteliales</taxon>
        <taxon>Dictyosteliaceae</taxon>
        <taxon>Dictyostelium</taxon>
    </lineage>
</organism>
<proteinExistence type="inferred from homology"/>
<protein>
    <recommendedName>
        <fullName>PXMP2/4 family protein 2</fullName>
    </recommendedName>
</protein>
<feature type="chain" id="PRO_0000333834" description="PXMP2/4 family protein 2">
    <location>
        <begin position="1"/>
        <end position="193"/>
    </location>
</feature>
<feature type="transmembrane region" description="Helical" evidence="1">
    <location>
        <begin position="56"/>
        <end position="78"/>
    </location>
</feature>
<feature type="transmembrane region" description="Helical" evidence="1">
    <location>
        <begin position="96"/>
        <end position="116"/>
    </location>
</feature>
<feature type="transmembrane region" description="Helical" evidence="1">
    <location>
        <begin position="132"/>
        <end position="152"/>
    </location>
</feature>
<feature type="transmembrane region" description="Helical" evidence="1">
    <location>
        <begin position="160"/>
        <end position="180"/>
    </location>
</feature>
<evidence type="ECO:0000255" key="1"/>
<evidence type="ECO:0000305" key="2"/>
<reference key="1">
    <citation type="journal article" date="2005" name="Nature">
        <title>The genome of the social amoeba Dictyostelium discoideum.</title>
        <authorList>
            <person name="Eichinger L."/>
            <person name="Pachebat J.A."/>
            <person name="Gloeckner G."/>
            <person name="Rajandream M.A."/>
            <person name="Sucgang R."/>
            <person name="Berriman M."/>
            <person name="Song J."/>
            <person name="Olsen R."/>
            <person name="Szafranski K."/>
            <person name="Xu Q."/>
            <person name="Tunggal B."/>
            <person name="Kummerfeld S."/>
            <person name="Madera M."/>
            <person name="Konfortov B.A."/>
            <person name="Rivero F."/>
            <person name="Bankier A.T."/>
            <person name="Lehmann R."/>
            <person name="Hamlin N."/>
            <person name="Davies R."/>
            <person name="Gaudet P."/>
            <person name="Fey P."/>
            <person name="Pilcher K."/>
            <person name="Chen G."/>
            <person name="Saunders D."/>
            <person name="Sodergren E.J."/>
            <person name="Davis P."/>
            <person name="Kerhornou A."/>
            <person name="Nie X."/>
            <person name="Hall N."/>
            <person name="Anjard C."/>
            <person name="Hemphill L."/>
            <person name="Bason N."/>
            <person name="Farbrother P."/>
            <person name="Desany B."/>
            <person name="Just E."/>
            <person name="Morio T."/>
            <person name="Rost R."/>
            <person name="Churcher C.M."/>
            <person name="Cooper J."/>
            <person name="Haydock S."/>
            <person name="van Driessche N."/>
            <person name="Cronin A."/>
            <person name="Goodhead I."/>
            <person name="Muzny D.M."/>
            <person name="Mourier T."/>
            <person name="Pain A."/>
            <person name="Lu M."/>
            <person name="Harper D."/>
            <person name="Lindsay R."/>
            <person name="Hauser H."/>
            <person name="James K.D."/>
            <person name="Quiles M."/>
            <person name="Madan Babu M."/>
            <person name="Saito T."/>
            <person name="Buchrieser C."/>
            <person name="Wardroper A."/>
            <person name="Felder M."/>
            <person name="Thangavelu M."/>
            <person name="Johnson D."/>
            <person name="Knights A."/>
            <person name="Loulseged H."/>
            <person name="Mungall K.L."/>
            <person name="Oliver K."/>
            <person name="Price C."/>
            <person name="Quail M.A."/>
            <person name="Urushihara H."/>
            <person name="Hernandez J."/>
            <person name="Rabbinowitsch E."/>
            <person name="Steffen D."/>
            <person name="Sanders M."/>
            <person name="Ma J."/>
            <person name="Kohara Y."/>
            <person name="Sharp S."/>
            <person name="Simmonds M.N."/>
            <person name="Spiegler S."/>
            <person name="Tivey A."/>
            <person name="Sugano S."/>
            <person name="White B."/>
            <person name="Walker D."/>
            <person name="Woodward J.R."/>
            <person name="Winckler T."/>
            <person name="Tanaka Y."/>
            <person name="Shaulsky G."/>
            <person name="Schleicher M."/>
            <person name="Weinstock G.M."/>
            <person name="Rosenthal A."/>
            <person name="Cox E.C."/>
            <person name="Chisholm R.L."/>
            <person name="Gibbs R.A."/>
            <person name="Loomis W.F."/>
            <person name="Platzer M."/>
            <person name="Kay R.R."/>
            <person name="Williams J.G."/>
            <person name="Dear P.H."/>
            <person name="Noegel A.A."/>
            <person name="Barrell B.G."/>
            <person name="Kuspa A."/>
        </authorList>
    </citation>
    <scope>NUCLEOTIDE SEQUENCE [LARGE SCALE GENOMIC DNA]</scope>
    <source>
        <strain>AX4</strain>
    </source>
</reference>
<dbReference type="EMBL" id="AAFI02000023">
    <property type="protein sequence ID" value="EAL68437.1"/>
    <property type="molecule type" value="Genomic_DNA"/>
</dbReference>
<dbReference type="RefSeq" id="XP_642423.1">
    <property type="nucleotide sequence ID" value="XM_637331.1"/>
</dbReference>
<dbReference type="FunCoup" id="Q54XX9">
    <property type="interactions" value="133"/>
</dbReference>
<dbReference type="PaxDb" id="44689-DDB0302424"/>
<dbReference type="EnsemblProtists" id="EAL68437">
    <property type="protein sequence ID" value="EAL68437"/>
    <property type="gene ID" value="DDB_G0278529"/>
</dbReference>
<dbReference type="GeneID" id="8621628"/>
<dbReference type="KEGG" id="ddi:DDB_G0278529"/>
<dbReference type="dictyBase" id="DDB_G0278529"/>
<dbReference type="VEuPathDB" id="AmoebaDB:DDB_G0278529"/>
<dbReference type="eggNOG" id="KOG1944">
    <property type="taxonomic scope" value="Eukaryota"/>
</dbReference>
<dbReference type="HOGENOM" id="CLU_049109_8_2_1"/>
<dbReference type="InParanoid" id="Q54XX9"/>
<dbReference type="OMA" id="AYMKTRH"/>
<dbReference type="PhylomeDB" id="Q54XX9"/>
<dbReference type="PRO" id="PR:Q54XX9"/>
<dbReference type="Proteomes" id="UP000002195">
    <property type="component" value="Chromosome 3"/>
</dbReference>
<dbReference type="GO" id="GO:0005737">
    <property type="term" value="C:cytoplasm"/>
    <property type="evidence" value="ECO:0000318"/>
    <property type="project" value="GO_Central"/>
</dbReference>
<dbReference type="GO" id="GO:0016020">
    <property type="term" value="C:membrane"/>
    <property type="evidence" value="ECO:0007669"/>
    <property type="project" value="UniProtKB-SubCell"/>
</dbReference>
<dbReference type="GO" id="GO:0005739">
    <property type="term" value="C:mitochondrion"/>
    <property type="evidence" value="ECO:0000318"/>
    <property type="project" value="GO_Central"/>
</dbReference>
<dbReference type="InterPro" id="IPR007248">
    <property type="entry name" value="Mpv17_PMP22"/>
</dbReference>
<dbReference type="PANTHER" id="PTHR11266">
    <property type="entry name" value="PEROXISOMAL MEMBRANE PROTEIN 2, PXMP2 MPV17"/>
    <property type="match status" value="1"/>
</dbReference>
<dbReference type="PANTHER" id="PTHR11266:SF17">
    <property type="entry name" value="PROTEIN MPV17"/>
    <property type="match status" value="1"/>
</dbReference>
<dbReference type="Pfam" id="PF04117">
    <property type="entry name" value="Mpv17_PMP22"/>
    <property type="match status" value="1"/>
</dbReference>
<gene>
    <name type="ORF">DDB_G0278529</name>
</gene>
<keyword id="KW-0472">Membrane</keyword>
<keyword id="KW-1185">Reference proteome</keyword>
<keyword id="KW-0812">Transmembrane</keyword>
<keyword id="KW-1133">Transmembrane helix</keyword>
<comment type="subcellular location">
    <subcellularLocation>
        <location evidence="2">Membrane</location>
        <topology evidence="2">Multi-pass membrane protein</topology>
    </subcellularLocation>
</comment>
<comment type="similarity">
    <text evidence="2">Belongs to the peroxisomal membrane protein PXMP2/4 family.</text>
</comment>
<sequence>MRKLWGLYLGLLDNHPLVTKSLSTGFLMGTGDILAQRLEHKFKDEKSQFKLDYKRVATMSTVGIFYSGPMLHYWYRSLDIMVKGEGRSVIIKKMLIDQLLFAPVAIGGFMTVTNFINNKGELKNLENFTKELFYAVKINWLIWPAAQIINFSLVPPNLRVLYSSIISIFWGMFLSHISFDKDHHIRNQNKEIN</sequence>